<name>SCLT1_MOUSE</name>
<protein>
    <recommendedName>
        <fullName>Sodium channel and clathrin linker 1</fullName>
    </recommendedName>
    <alternativeName>
        <fullName>Sodium channel-associated protein 1</fullName>
    </alternativeName>
</protein>
<comment type="function">
    <text evidence="1">Adapter protein that links SCN10A to clathrin. Regulates SCN10A channel activity, possibly by promoting channel internalization (By similarity).</text>
</comment>
<comment type="subunit">
    <text evidence="1">Interacts with SCN10A and clathrin. Identified in a complex containing SCN10A, clathrin and SCLT1 (By similarity).</text>
</comment>
<comment type="subcellular location">
    <subcellularLocation>
        <location evidence="1">Cytoplasm</location>
        <location evidence="1">Cytoskeleton</location>
        <location evidence="1">Microtubule organizing center</location>
        <location evidence="1">Centrosome</location>
        <location evidence="1">Centriole</location>
    </subcellularLocation>
    <text evidence="1">Localizes to the distal appendage region of the centriole, which anchors the mother centriole to the plasma membrane.</text>
</comment>
<comment type="alternative products">
    <event type="alternative splicing"/>
    <isoform>
        <id>G5E861-1</id>
        <name>1</name>
        <sequence type="displayed"/>
    </isoform>
    <isoform>
        <id>G5E861-2</id>
        <name>2</name>
        <sequence type="described" ref="VSP_047144 VSP_047145"/>
    </isoform>
</comment>
<feature type="initiator methionine" description="Removed" evidence="2">
    <location>
        <position position="1"/>
    </location>
</feature>
<feature type="chain" id="PRO_0000422822" description="Sodium channel and clathrin linker 1">
    <location>
        <begin position="2"/>
        <end position="688"/>
    </location>
</feature>
<feature type="coiled-coil region" evidence="3">
    <location>
        <begin position="59"/>
        <end position="108"/>
    </location>
</feature>
<feature type="coiled-coil region" evidence="3">
    <location>
        <begin position="152"/>
        <end position="673"/>
    </location>
</feature>
<feature type="modified residue" description="N-acetylalanine" evidence="2">
    <location>
        <position position="2"/>
    </location>
</feature>
<feature type="modified residue" description="Phosphoserine" evidence="5">
    <location>
        <position position="681"/>
    </location>
</feature>
<feature type="splice variant" id="VSP_047144" description="In isoform 2." evidence="4">
    <original>I</original>
    <variation>L</variation>
    <location>
        <position position="350"/>
    </location>
</feature>
<feature type="splice variant" id="VSP_047145" description="In isoform 2." evidence="4">
    <location>
        <begin position="351"/>
        <end position="688"/>
    </location>
</feature>
<proteinExistence type="evidence at protein level"/>
<evidence type="ECO:0000250" key="1"/>
<evidence type="ECO:0000250" key="2">
    <source>
        <dbReference type="UniProtKB" id="Q96NL6"/>
    </source>
</evidence>
<evidence type="ECO:0000255" key="3"/>
<evidence type="ECO:0000303" key="4">
    <source>
    </source>
</evidence>
<evidence type="ECO:0007744" key="5">
    <source>
    </source>
</evidence>
<keyword id="KW-0007">Acetylation</keyword>
<keyword id="KW-0025">Alternative splicing</keyword>
<keyword id="KW-0175">Coiled coil</keyword>
<keyword id="KW-0963">Cytoplasm</keyword>
<keyword id="KW-0206">Cytoskeleton</keyword>
<keyword id="KW-0597">Phosphoprotein</keyword>
<keyword id="KW-1185">Reference proteome</keyword>
<organism>
    <name type="scientific">Mus musculus</name>
    <name type="common">Mouse</name>
    <dbReference type="NCBI Taxonomy" id="10090"/>
    <lineage>
        <taxon>Eukaryota</taxon>
        <taxon>Metazoa</taxon>
        <taxon>Chordata</taxon>
        <taxon>Craniata</taxon>
        <taxon>Vertebrata</taxon>
        <taxon>Euteleostomi</taxon>
        <taxon>Mammalia</taxon>
        <taxon>Eutheria</taxon>
        <taxon>Euarchontoglires</taxon>
        <taxon>Glires</taxon>
        <taxon>Rodentia</taxon>
        <taxon>Myomorpha</taxon>
        <taxon>Muroidea</taxon>
        <taxon>Muridae</taxon>
        <taxon>Murinae</taxon>
        <taxon>Mus</taxon>
        <taxon>Mus</taxon>
    </lineage>
</organism>
<reference key="1">
    <citation type="journal article" date="2009" name="PLoS Biol.">
        <title>Lineage-specific biology revealed by a finished genome assembly of the mouse.</title>
        <authorList>
            <person name="Church D.M."/>
            <person name="Goodstadt L."/>
            <person name="Hillier L.W."/>
            <person name="Zody M.C."/>
            <person name="Goldstein S."/>
            <person name="She X."/>
            <person name="Bult C.J."/>
            <person name="Agarwala R."/>
            <person name="Cherry J.L."/>
            <person name="DiCuccio M."/>
            <person name="Hlavina W."/>
            <person name="Kapustin Y."/>
            <person name="Meric P."/>
            <person name="Maglott D."/>
            <person name="Birtle Z."/>
            <person name="Marques A.C."/>
            <person name="Graves T."/>
            <person name="Zhou S."/>
            <person name="Teague B."/>
            <person name="Potamousis K."/>
            <person name="Churas C."/>
            <person name="Place M."/>
            <person name="Herschleb J."/>
            <person name="Runnheim R."/>
            <person name="Forrest D."/>
            <person name="Amos-Landgraf J."/>
            <person name="Schwartz D.C."/>
            <person name="Cheng Z."/>
            <person name="Lindblad-Toh K."/>
            <person name="Eichler E.E."/>
            <person name="Ponting C.P."/>
        </authorList>
    </citation>
    <scope>NUCLEOTIDE SEQUENCE [LARGE SCALE GENOMIC DNA]</scope>
    <source>
        <strain>C57BL/6J</strain>
    </source>
</reference>
<reference key="2">
    <citation type="submission" date="2005-07" db="EMBL/GenBank/DDBJ databases">
        <authorList>
            <person name="Mural R.J."/>
            <person name="Adams M.D."/>
            <person name="Myers E.W."/>
            <person name="Smith H.O."/>
            <person name="Venter J.C."/>
        </authorList>
    </citation>
    <scope>NUCLEOTIDE SEQUENCE [LARGE SCALE GENOMIC DNA]</scope>
</reference>
<reference key="3">
    <citation type="journal article" date="2004" name="Genome Res.">
        <title>The status, quality, and expansion of the NIH full-length cDNA project: the Mammalian Gene Collection (MGC).</title>
        <authorList>
            <consortium name="The MGC Project Team"/>
        </authorList>
    </citation>
    <scope>NUCLEOTIDE SEQUENCE [LARGE SCALE MRNA] (ISOFORM 2)</scope>
    <source>
        <strain>C57BL/6J</strain>
        <tissue>Brain</tissue>
    </source>
</reference>
<reference key="4">
    <citation type="journal article" date="2005" name="Science">
        <title>The transcriptional landscape of the mammalian genome.</title>
        <authorList>
            <person name="Carninci P."/>
            <person name="Kasukawa T."/>
            <person name="Katayama S."/>
            <person name="Gough J."/>
            <person name="Frith M.C."/>
            <person name="Maeda N."/>
            <person name="Oyama R."/>
            <person name="Ravasi T."/>
            <person name="Lenhard B."/>
            <person name="Wells C."/>
            <person name="Kodzius R."/>
            <person name="Shimokawa K."/>
            <person name="Bajic V.B."/>
            <person name="Brenner S.E."/>
            <person name="Batalov S."/>
            <person name="Forrest A.R."/>
            <person name="Zavolan M."/>
            <person name="Davis M.J."/>
            <person name="Wilming L.G."/>
            <person name="Aidinis V."/>
            <person name="Allen J.E."/>
            <person name="Ambesi-Impiombato A."/>
            <person name="Apweiler R."/>
            <person name="Aturaliya R.N."/>
            <person name="Bailey T.L."/>
            <person name="Bansal M."/>
            <person name="Baxter L."/>
            <person name="Beisel K.W."/>
            <person name="Bersano T."/>
            <person name="Bono H."/>
            <person name="Chalk A.M."/>
            <person name="Chiu K.P."/>
            <person name="Choudhary V."/>
            <person name="Christoffels A."/>
            <person name="Clutterbuck D.R."/>
            <person name="Crowe M.L."/>
            <person name="Dalla E."/>
            <person name="Dalrymple B.P."/>
            <person name="de Bono B."/>
            <person name="Della Gatta G."/>
            <person name="di Bernardo D."/>
            <person name="Down T."/>
            <person name="Engstrom P."/>
            <person name="Fagiolini M."/>
            <person name="Faulkner G."/>
            <person name="Fletcher C.F."/>
            <person name="Fukushima T."/>
            <person name="Furuno M."/>
            <person name="Futaki S."/>
            <person name="Gariboldi M."/>
            <person name="Georgii-Hemming P."/>
            <person name="Gingeras T.R."/>
            <person name="Gojobori T."/>
            <person name="Green R.E."/>
            <person name="Gustincich S."/>
            <person name="Harbers M."/>
            <person name="Hayashi Y."/>
            <person name="Hensch T.K."/>
            <person name="Hirokawa N."/>
            <person name="Hill D."/>
            <person name="Huminiecki L."/>
            <person name="Iacono M."/>
            <person name="Ikeo K."/>
            <person name="Iwama A."/>
            <person name="Ishikawa T."/>
            <person name="Jakt M."/>
            <person name="Kanapin A."/>
            <person name="Katoh M."/>
            <person name="Kawasawa Y."/>
            <person name="Kelso J."/>
            <person name="Kitamura H."/>
            <person name="Kitano H."/>
            <person name="Kollias G."/>
            <person name="Krishnan S.P."/>
            <person name="Kruger A."/>
            <person name="Kummerfeld S.K."/>
            <person name="Kurochkin I.V."/>
            <person name="Lareau L.F."/>
            <person name="Lazarevic D."/>
            <person name="Lipovich L."/>
            <person name="Liu J."/>
            <person name="Liuni S."/>
            <person name="McWilliam S."/>
            <person name="Madan Babu M."/>
            <person name="Madera M."/>
            <person name="Marchionni L."/>
            <person name="Matsuda H."/>
            <person name="Matsuzawa S."/>
            <person name="Miki H."/>
            <person name="Mignone F."/>
            <person name="Miyake S."/>
            <person name="Morris K."/>
            <person name="Mottagui-Tabar S."/>
            <person name="Mulder N."/>
            <person name="Nakano N."/>
            <person name="Nakauchi H."/>
            <person name="Ng P."/>
            <person name="Nilsson R."/>
            <person name="Nishiguchi S."/>
            <person name="Nishikawa S."/>
            <person name="Nori F."/>
            <person name="Ohara O."/>
            <person name="Okazaki Y."/>
            <person name="Orlando V."/>
            <person name="Pang K.C."/>
            <person name="Pavan W.J."/>
            <person name="Pavesi G."/>
            <person name="Pesole G."/>
            <person name="Petrovsky N."/>
            <person name="Piazza S."/>
            <person name="Reed J."/>
            <person name="Reid J.F."/>
            <person name="Ring B.Z."/>
            <person name="Ringwald M."/>
            <person name="Rost B."/>
            <person name="Ruan Y."/>
            <person name="Salzberg S.L."/>
            <person name="Sandelin A."/>
            <person name="Schneider C."/>
            <person name="Schoenbach C."/>
            <person name="Sekiguchi K."/>
            <person name="Semple C.A."/>
            <person name="Seno S."/>
            <person name="Sessa L."/>
            <person name="Sheng Y."/>
            <person name="Shibata Y."/>
            <person name="Shimada H."/>
            <person name="Shimada K."/>
            <person name="Silva D."/>
            <person name="Sinclair B."/>
            <person name="Sperling S."/>
            <person name="Stupka E."/>
            <person name="Sugiura K."/>
            <person name="Sultana R."/>
            <person name="Takenaka Y."/>
            <person name="Taki K."/>
            <person name="Tammoja K."/>
            <person name="Tan S.L."/>
            <person name="Tang S."/>
            <person name="Taylor M.S."/>
            <person name="Tegner J."/>
            <person name="Teichmann S.A."/>
            <person name="Ueda H.R."/>
            <person name="van Nimwegen E."/>
            <person name="Verardo R."/>
            <person name="Wei C.L."/>
            <person name="Yagi K."/>
            <person name="Yamanishi H."/>
            <person name="Zabarovsky E."/>
            <person name="Zhu S."/>
            <person name="Zimmer A."/>
            <person name="Hide W."/>
            <person name="Bult C."/>
            <person name="Grimmond S.M."/>
            <person name="Teasdale R.D."/>
            <person name="Liu E.T."/>
            <person name="Brusic V."/>
            <person name="Quackenbush J."/>
            <person name="Wahlestedt C."/>
            <person name="Mattick J.S."/>
            <person name="Hume D.A."/>
            <person name="Kai C."/>
            <person name="Sasaki D."/>
            <person name="Tomaru Y."/>
            <person name="Fukuda S."/>
            <person name="Kanamori-Katayama M."/>
            <person name="Suzuki M."/>
            <person name="Aoki J."/>
            <person name="Arakawa T."/>
            <person name="Iida J."/>
            <person name="Imamura K."/>
            <person name="Itoh M."/>
            <person name="Kato T."/>
            <person name="Kawaji H."/>
            <person name="Kawagashira N."/>
            <person name="Kawashima T."/>
            <person name="Kojima M."/>
            <person name="Kondo S."/>
            <person name="Konno H."/>
            <person name="Nakano K."/>
            <person name="Ninomiya N."/>
            <person name="Nishio T."/>
            <person name="Okada M."/>
            <person name="Plessy C."/>
            <person name="Shibata K."/>
            <person name="Shiraki T."/>
            <person name="Suzuki S."/>
            <person name="Tagami M."/>
            <person name="Waki K."/>
            <person name="Watahiki A."/>
            <person name="Okamura-Oho Y."/>
            <person name="Suzuki H."/>
            <person name="Kawai J."/>
            <person name="Hayashizaki Y."/>
        </authorList>
    </citation>
    <scope>NUCLEOTIDE SEQUENCE [LARGE SCALE MRNA] OF 1-359 (ISOFORM 1)</scope>
    <source>
        <strain>C57BL/6J</strain>
        <tissue>Head</tissue>
    </source>
</reference>
<reference key="5">
    <citation type="journal article" date="2010" name="Cell">
        <title>A tissue-specific atlas of mouse protein phosphorylation and expression.</title>
        <authorList>
            <person name="Huttlin E.L."/>
            <person name="Jedrychowski M.P."/>
            <person name="Elias J.E."/>
            <person name="Goswami T."/>
            <person name="Rad R."/>
            <person name="Beausoleil S.A."/>
            <person name="Villen J."/>
            <person name="Haas W."/>
            <person name="Sowa M.E."/>
            <person name="Gygi S.P."/>
        </authorList>
    </citation>
    <scope>PHOSPHORYLATION [LARGE SCALE ANALYSIS] AT SER-681</scope>
    <scope>IDENTIFICATION BY MASS SPECTROMETRY [LARGE SCALE ANALYSIS]</scope>
    <source>
        <tissue>Kidney</tissue>
        <tissue>Spleen</tissue>
    </source>
</reference>
<accession>G5E861</accession>
<accession>Q6PAJ0</accession>
<accession>Q9CSV4</accession>
<accession>Q9CUR9</accession>
<dbReference type="EMBL" id="AC102795">
    <property type="status" value="NOT_ANNOTATED_CDS"/>
    <property type="molecule type" value="Genomic_DNA"/>
</dbReference>
<dbReference type="EMBL" id="AC154098">
    <property type="status" value="NOT_ANNOTATED_CDS"/>
    <property type="molecule type" value="Genomic_DNA"/>
</dbReference>
<dbReference type="EMBL" id="AC161235">
    <property type="status" value="NOT_ANNOTATED_CDS"/>
    <property type="molecule type" value="Genomic_DNA"/>
</dbReference>
<dbReference type="EMBL" id="CH466530">
    <property type="protein sequence ID" value="EDL35173.1"/>
    <property type="molecule type" value="Genomic_DNA"/>
</dbReference>
<dbReference type="EMBL" id="BC043136">
    <property type="protein sequence ID" value="AAH43136.1"/>
    <property type="molecule type" value="mRNA"/>
</dbReference>
<dbReference type="EMBL" id="BC060271">
    <property type="protein sequence ID" value="AAH60271.1"/>
    <property type="molecule type" value="mRNA"/>
</dbReference>
<dbReference type="EMBL" id="AK011907">
    <property type="protein sequence ID" value="BAB27908.1"/>
    <property type="molecule type" value="mRNA"/>
</dbReference>
<dbReference type="EMBL" id="AK014777">
    <property type="protein sequence ID" value="BAB29547.1"/>
    <property type="molecule type" value="mRNA"/>
</dbReference>
<dbReference type="CCDS" id="CCDS38425.1">
    <molecule id="G5E861-1"/>
</dbReference>
<dbReference type="RefSeq" id="NP_001074880.1">
    <molecule id="G5E861-1"/>
    <property type="nucleotide sequence ID" value="NM_001081411.1"/>
</dbReference>
<dbReference type="SMR" id="G5E861"/>
<dbReference type="BioGRID" id="211987">
    <property type="interactions" value="1"/>
</dbReference>
<dbReference type="FunCoup" id="G5E861">
    <property type="interactions" value="1528"/>
</dbReference>
<dbReference type="STRING" id="10090.ENSMUSP00000026866"/>
<dbReference type="GlyGen" id="G5E861">
    <property type="glycosylation" value="1 site, 1 O-linked glycan (1 site)"/>
</dbReference>
<dbReference type="iPTMnet" id="G5E861"/>
<dbReference type="PhosphoSitePlus" id="G5E861"/>
<dbReference type="jPOST" id="G5E861"/>
<dbReference type="PaxDb" id="10090-ENSMUSP00000026866"/>
<dbReference type="ProteomicsDB" id="255490">
    <molecule id="G5E861-1"/>
</dbReference>
<dbReference type="ProteomicsDB" id="255491">
    <molecule id="G5E861-2"/>
</dbReference>
<dbReference type="Pumba" id="G5E861"/>
<dbReference type="Antibodypedia" id="45370">
    <property type="antibodies" value="127 antibodies from 21 providers"/>
</dbReference>
<dbReference type="DNASU" id="67161"/>
<dbReference type="Ensembl" id="ENSMUST00000026866.15">
    <molecule id="G5E861-1"/>
    <property type="protein sequence ID" value="ENSMUSP00000026866.9"/>
    <property type="gene ID" value="ENSMUSG00000059834.13"/>
</dbReference>
<dbReference type="Ensembl" id="ENSMUST00000148769.8">
    <molecule id="G5E861-2"/>
    <property type="protein sequence ID" value="ENSMUSP00000123392.2"/>
    <property type="gene ID" value="ENSMUSG00000059834.13"/>
</dbReference>
<dbReference type="GeneID" id="67161"/>
<dbReference type="KEGG" id="mmu:67161"/>
<dbReference type="UCSC" id="uc008pcn.1">
    <molecule id="G5E861-1"/>
    <property type="organism name" value="mouse"/>
</dbReference>
<dbReference type="AGR" id="MGI:1914411"/>
<dbReference type="CTD" id="132320"/>
<dbReference type="MGI" id="MGI:1914411">
    <property type="gene designation" value="Sclt1"/>
</dbReference>
<dbReference type="VEuPathDB" id="HostDB:ENSMUSG00000059834"/>
<dbReference type="eggNOG" id="ENOG502QS6B">
    <property type="taxonomic scope" value="Eukaryota"/>
</dbReference>
<dbReference type="GeneTree" id="ENSGT00730000111168"/>
<dbReference type="HOGENOM" id="CLU_025503_0_0_1"/>
<dbReference type="InParanoid" id="G5E861"/>
<dbReference type="OMA" id="RIHLEEC"/>
<dbReference type="OrthoDB" id="551053at2759"/>
<dbReference type="PhylomeDB" id="G5E861"/>
<dbReference type="TreeFam" id="TF331372"/>
<dbReference type="Reactome" id="R-MMU-5620912">
    <property type="pathway name" value="Anchoring of the basal body to the plasma membrane"/>
</dbReference>
<dbReference type="BioGRID-ORCS" id="67161">
    <property type="hits" value="3 hits in 78 CRISPR screens"/>
</dbReference>
<dbReference type="ChiTaRS" id="Sclt1">
    <property type="organism name" value="mouse"/>
</dbReference>
<dbReference type="PRO" id="PR:G5E861"/>
<dbReference type="Proteomes" id="UP000000589">
    <property type="component" value="Chromosome 3"/>
</dbReference>
<dbReference type="RNAct" id="G5E861">
    <property type="molecule type" value="protein"/>
</dbReference>
<dbReference type="Bgee" id="ENSMUSG00000059834">
    <property type="expression patterns" value="Expressed in spermatid and 227 other cell types or tissues"/>
</dbReference>
<dbReference type="ExpressionAtlas" id="G5E861">
    <property type="expression patterns" value="baseline and differential"/>
</dbReference>
<dbReference type="GO" id="GO:0005814">
    <property type="term" value="C:centriole"/>
    <property type="evidence" value="ECO:0000314"/>
    <property type="project" value="MGI"/>
</dbReference>
<dbReference type="GO" id="GO:0005813">
    <property type="term" value="C:centrosome"/>
    <property type="evidence" value="ECO:0007669"/>
    <property type="project" value="Ensembl"/>
</dbReference>
<dbReference type="GO" id="GO:0036064">
    <property type="term" value="C:ciliary basal body"/>
    <property type="evidence" value="ECO:0007669"/>
    <property type="project" value="Ensembl"/>
</dbReference>
<dbReference type="GO" id="GO:0097539">
    <property type="term" value="C:ciliary transition fiber"/>
    <property type="evidence" value="ECO:0000266"/>
    <property type="project" value="MGI"/>
</dbReference>
<dbReference type="GO" id="GO:0071439">
    <property type="term" value="C:clathrin complex"/>
    <property type="evidence" value="ECO:0007669"/>
    <property type="project" value="Ensembl"/>
</dbReference>
<dbReference type="GO" id="GO:0005829">
    <property type="term" value="C:cytosol"/>
    <property type="evidence" value="ECO:0007669"/>
    <property type="project" value="Ensembl"/>
</dbReference>
<dbReference type="GO" id="GO:0030276">
    <property type="term" value="F:clathrin binding"/>
    <property type="evidence" value="ECO:0007669"/>
    <property type="project" value="Ensembl"/>
</dbReference>
<dbReference type="GO" id="GO:0017080">
    <property type="term" value="F:sodium channel regulator activity"/>
    <property type="evidence" value="ECO:0007669"/>
    <property type="project" value="Ensembl"/>
</dbReference>
<dbReference type="GO" id="GO:0060271">
    <property type="term" value="P:cilium assembly"/>
    <property type="evidence" value="ECO:0000250"/>
    <property type="project" value="UniProtKB"/>
</dbReference>
<dbReference type="GO" id="GO:0045162">
    <property type="term" value="P:clustering of voltage-gated sodium channels"/>
    <property type="evidence" value="ECO:0007669"/>
    <property type="project" value="Ensembl"/>
</dbReference>
<dbReference type="InterPro" id="IPR038911">
    <property type="entry name" value="SCLT1"/>
</dbReference>
<dbReference type="PANTHER" id="PTHR35970">
    <property type="entry name" value="SODIUM CHANNEL AND CLATHRIN LINKER 1"/>
    <property type="match status" value="1"/>
</dbReference>
<dbReference type="PANTHER" id="PTHR35970:SF1">
    <property type="entry name" value="SODIUM CHANNEL AND CLATHRIN LINKER 1"/>
    <property type="match status" value="1"/>
</dbReference>
<gene>
    <name type="primary">Sclt1</name>
    <name type="synonym">Sap1</name>
</gene>
<sequence>MATEIDLLRDQKDKLNDILRQHQIEHIFRDPTMQNSMSKGGRGDTLVDSINEQSSLPPLIAEYEKHLEELNRQLTYYQKHMGEMKLQLETVITENERLHSKLKDAVEKQLEALPFGTGIGNDICADDETVRILQEQLQLANQEKTWALELWQTASQELQSVQKLYQEHMTEAQIHEFENRKQKDQLNNFQQLTKKLHVANENIEMTNHHFLKTVTEQNMEIEKLRKHLRQARLDLRVAVSKVEELTKVTEGLQEQMLKKEEDIMSAQGKEEASDRRVQQLQSSIKQLESRLCVAIEEADVLKTGKSNLEKQIKELQAKCSESENEKYEAISRARDSMQLLEEANIKQNQILLEEKQKEVDREKMKKTMSQLIQDAAIKARKEVESTKKQYEILISQLKEELSTLQMDCDEKQGQIDRAIRGKRAVEEELEKIYREGKQDESDYRKLEEMHQRCLAAERSKDDLQLRLKSAENRIKQLEINSSEEMSRSHEMIQKLQTVLESERENCGFVSEQRLKLQQENEQLQKETEDLRKVALEAQKKAKLKVSTMEHQFSIKEHGFEVQLREMEDSNRNSIVELRHLLAAQQKTANRWKEETKKLTESAEMRISSLKSELSRQKLHTQELLSQLEMANEKVAENEKLILEHQEKANRLQRRLSQAEERAASASQQLSVITVQRRKAASMMNLENI</sequence>